<dbReference type="EC" id="6.3.5.-" evidence="1"/>
<dbReference type="EMBL" id="CP000033">
    <property type="protein sequence ID" value="AAV42412.1"/>
    <property type="molecule type" value="Genomic_DNA"/>
</dbReference>
<dbReference type="RefSeq" id="WP_003546283.1">
    <property type="nucleotide sequence ID" value="NC_006814.3"/>
</dbReference>
<dbReference type="RefSeq" id="YP_193443.1">
    <property type="nucleotide sequence ID" value="NC_006814.3"/>
</dbReference>
<dbReference type="SMR" id="Q5FLL2"/>
<dbReference type="STRING" id="272621.LBA0531"/>
<dbReference type="GeneID" id="93290341"/>
<dbReference type="KEGG" id="lac:LBA0531"/>
<dbReference type="PATRIC" id="fig|272621.13.peg.506"/>
<dbReference type="eggNOG" id="COG0721">
    <property type="taxonomic scope" value="Bacteria"/>
</dbReference>
<dbReference type="HOGENOM" id="CLU_105899_1_2_9"/>
<dbReference type="OrthoDB" id="9813938at2"/>
<dbReference type="BioCyc" id="LACI272621:G1G49-554-MONOMER"/>
<dbReference type="Proteomes" id="UP000006381">
    <property type="component" value="Chromosome"/>
</dbReference>
<dbReference type="GO" id="GO:0050566">
    <property type="term" value="F:asparaginyl-tRNA synthase (glutamine-hydrolyzing) activity"/>
    <property type="evidence" value="ECO:0007669"/>
    <property type="project" value="RHEA"/>
</dbReference>
<dbReference type="GO" id="GO:0005524">
    <property type="term" value="F:ATP binding"/>
    <property type="evidence" value="ECO:0007669"/>
    <property type="project" value="UniProtKB-KW"/>
</dbReference>
<dbReference type="GO" id="GO:0050567">
    <property type="term" value="F:glutaminyl-tRNA synthase (glutamine-hydrolyzing) activity"/>
    <property type="evidence" value="ECO:0007669"/>
    <property type="project" value="UniProtKB-UniRule"/>
</dbReference>
<dbReference type="GO" id="GO:0070681">
    <property type="term" value="P:glutaminyl-tRNAGln biosynthesis via transamidation"/>
    <property type="evidence" value="ECO:0007669"/>
    <property type="project" value="TreeGrafter"/>
</dbReference>
<dbReference type="GO" id="GO:0006450">
    <property type="term" value="P:regulation of translational fidelity"/>
    <property type="evidence" value="ECO:0007669"/>
    <property type="project" value="InterPro"/>
</dbReference>
<dbReference type="GO" id="GO:0006412">
    <property type="term" value="P:translation"/>
    <property type="evidence" value="ECO:0007669"/>
    <property type="project" value="UniProtKB-UniRule"/>
</dbReference>
<dbReference type="Gene3D" id="1.10.20.60">
    <property type="entry name" value="Glu-tRNAGln amidotransferase C subunit, N-terminal domain"/>
    <property type="match status" value="1"/>
</dbReference>
<dbReference type="HAMAP" id="MF_00122">
    <property type="entry name" value="GatC"/>
    <property type="match status" value="1"/>
</dbReference>
<dbReference type="InterPro" id="IPR036113">
    <property type="entry name" value="Asp/Glu-ADT_sf_sub_c"/>
</dbReference>
<dbReference type="InterPro" id="IPR003837">
    <property type="entry name" value="GatC"/>
</dbReference>
<dbReference type="NCBIfam" id="TIGR00135">
    <property type="entry name" value="gatC"/>
    <property type="match status" value="1"/>
</dbReference>
<dbReference type="PANTHER" id="PTHR15004">
    <property type="entry name" value="GLUTAMYL-TRNA(GLN) AMIDOTRANSFERASE SUBUNIT C, MITOCHONDRIAL"/>
    <property type="match status" value="1"/>
</dbReference>
<dbReference type="PANTHER" id="PTHR15004:SF0">
    <property type="entry name" value="GLUTAMYL-TRNA(GLN) AMIDOTRANSFERASE SUBUNIT C, MITOCHONDRIAL"/>
    <property type="match status" value="1"/>
</dbReference>
<dbReference type="Pfam" id="PF02686">
    <property type="entry name" value="GatC"/>
    <property type="match status" value="1"/>
</dbReference>
<dbReference type="SUPFAM" id="SSF141000">
    <property type="entry name" value="Glu-tRNAGln amidotransferase C subunit"/>
    <property type="match status" value="1"/>
</dbReference>
<reference key="1">
    <citation type="journal article" date="2005" name="Proc. Natl. Acad. Sci. U.S.A.">
        <title>Complete genome sequence of the probiotic lactic acid bacterium Lactobacillus acidophilus NCFM.</title>
        <authorList>
            <person name="Altermann E."/>
            <person name="Russell W.M."/>
            <person name="Azcarate-Peril M.A."/>
            <person name="Barrangou R."/>
            <person name="Buck B.L."/>
            <person name="McAuliffe O."/>
            <person name="Souther N."/>
            <person name="Dobson A."/>
            <person name="Duong T."/>
            <person name="Callanan M."/>
            <person name="Lick S."/>
            <person name="Hamrick A."/>
            <person name="Cano R."/>
            <person name="Klaenhammer T.R."/>
        </authorList>
    </citation>
    <scope>NUCLEOTIDE SEQUENCE [LARGE SCALE GENOMIC DNA]</scope>
    <source>
        <strain>ATCC 700396 / NCK56 / N2 / NCFM</strain>
    </source>
</reference>
<proteinExistence type="inferred from homology"/>
<accession>Q5FLL2</accession>
<name>GATC_LACAC</name>
<organism>
    <name type="scientific">Lactobacillus acidophilus (strain ATCC 700396 / NCK56 / N2 / NCFM)</name>
    <dbReference type="NCBI Taxonomy" id="272621"/>
    <lineage>
        <taxon>Bacteria</taxon>
        <taxon>Bacillati</taxon>
        <taxon>Bacillota</taxon>
        <taxon>Bacilli</taxon>
        <taxon>Lactobacillales</taxon>
        <taxon>Lactobacillaceae</taxon>
        <taxon>Lactobacillus</taxon>
    </lineage>
</organism>
<protein>
    <recommendedName>
        <fullName evidence="1">Aspartyl/glutamyl-tRNA(Asn/Gln) amidotransferase subunit C</fullName>
        <shortName evidence="1">Asp/Glu-ADT subunit C</shortName>
        <ecNumber evidence="1">6.3.5.-</ecNumber>
    </recommendedName>
</protein>
<comment type="function">
    <text evidence="1">Allows the formation of correctly charged Asn-tRNA(Asn) or Gln-tRNA(Gln) through the transamidation of misacylated Asp-tRNA(Asn) or Glu-tRNA(Gln) in organisms which lack either or both of asparaginyl-tRNA or glutaminyl-tRNA synthetases. The reaction takes place in the presence of glutamine and ATP through an activated phospho-Asp-tRNA(Asn) or phospho-Glu-tRNA(Gln).</text>
</comment>
<comment type="catalytic activity">
    <reaction evidence="1">
        <text>L-glutamyl-tRNA(Gln) + L-glutamine + ATP + H2O = L-glutaminyl-tRNA(Gln) + L-glutamate + ADP + phosphate + H(+)</text>
        <dbReference type="Rhea" id="RHEA:17521"/>
        <dbReference type="Rhea" id="RHEA-COMP:9681"/>
        <dbReference type="Rhea" id="RHEA-COMP:9684"/>
        <dbReference type="ChEBI" id="CHEBI:15377"/>
        <dbReference type="ChEBI" id="CHEBI:15378"/>
        <dbReference type="ChEBI" id="CHEBI:29985"/>
        <dbReference type="ChEBI" id="CHEBI:30616"/>
        <dbReference type="ChEBI" id="CHEBI:43474"/>
        <dbReference type="ChEBI" id="CHEBI:58359"/>
        <dbReference type="ChEBI" id="CHEBI:78520"/>
        <dbReference type="ChEBI" id="CHEBI:78521"/>
        <dbReference type="ChEBI" id="CHEBI:456216"/>
    </reaction>
</comment>
<comment type="catalytic activity">
    <reaction evidence="1">
        <text>L-aspartyl-tRNA(Asn) + L-glutamine + ATP + H2O = L-asparaginyl-tRNA(Asn) + L-glutamate + ADP + phosphate + 2 H(+)</text>
        <dbReference type="Rhea" id="RHEA:14513"/>
        <dbReference type="Rhea" id="RHEA-COMP:9674"/>
        <dbReference type="Rhea" id="RHEA-COMP:9677"/>
        <dbReference type="ChEBI" id="CHEBI:15377"/>
        <dbReference type="ChEBI" id="CHEBI:15378"/>
        <dbReference type="ChEBI" id="CHEBI:29985"/>
        <dbReference type="ChEBI" id="CHEBI:30616"/>
        <dbReference type="ChEBI" id="CHEBI:43474"/>
        <dbReference type="ChEBI" id="CHEBI:58359"/>
        <dbReference type="ChEBI" id="CHEBI:78515"/>
        <dbReference type="ChEBI" id="CHEBI:78516"/>
        <dbReference type="ChEBI" id="CHEBI:456216"/>
    </reaction>
</comment>
<comment type="subunit">
    <text evidence="1">Heterotrimer of A, B and C subunits.</text>
</comment>
<comment type="similarity">
    <text evidence="1">Belongs to the GatC family.</text>
</comment>
<sequence length="102" mass="11738">MEITKDTIKHVATLSRLAFNEEELDKFTDQMGSIINMADQLSEVDTEGVEETVQVVDRDTVFREDIPEHWQGQTRETLMENVPEKANGYIKVPVIINKDEDE</sequence>
<keyword id="KW-0067">ATP-binding</keyword>
<keyword id="KW-0436">Ligase</keyword>
<keyword id="KW-0547">Nucleotide-binding</keyword>
<keyword id="KW-0648">Protein biosynthesis</keyword>
<keyword id="KW-1185">Reference proteome</keyword>
<feature type="chain" id="PRO_1000016133" description="Aspartyl/glutamyl-tRNA(Asn/Gln) amidotransferase subunit C">
    <location>
        <begin position="1"/>
        <end position="102"/>
    </location>
</feature>
<gene>
    <name evidence="1" type="primary">gatC</name>
    <name type="ordered locus">LBA0531</name>
</gene>
<evidence type="ECO:0000255" key="1">
    <source>
        <dbReference type="HAMAP-Rule" id="MF_00122"/>
    </source>
</evidence>